<accession>P86803</accession>
<reference evidence="6" key="1">
    <citation type="journal article" date="2010" name="Protein J.">
        <title>Neurotoxic, myotoxic and cytolytic activities of the new basic PLA(2) isoforms BmjeTX-I and BmjeTX-II isolated from the Bothrops marajoensis (Marajo Lancehead) snake venom.</title>
        <authorList>
            <person name="Ponce-Soto L.A."/>
            <person name="Martins-de-Souza D."/>
            <person name="Marangoni S."/>
        </authorList>
    </citation>
    <scope>PROTEIN SEQUENCE</scope>
    <scope>FUNCTION</scope>
    <scope>CATALYTIC ACTIVITY</scope>
    <scope>SUBCELLULAR LOCATION</scope>
    <scope>TISSUE SPECIFICITY</scope>
    <scope>MASS SPECTROMETRY</scope>
    <source>
        <tissue evidence="5">Venom</tissue>
    </source>
</reference>
<protein>
    <recommendedName>
        <fullName>Basic phospholipase A2 BmjeTX-I</fullName>
        <shortName>svPLA2</shortName>
        <ecNumber>3.1.1.4</ecNumber>
    </recommendedName>
    <alternativeName>
        <fullName evidence="2">Phosphatidylcholine 2-acylhydrolase</fullName>
    </alternativeName>
</protein>
<name>PA2B1_BOTMA</name>
<dbReference type="EC" id="3.1.1.4"/>
<dbReference type="SMR" id="P86803"/>
<dbReference type="GO" id="GO:0005576">
    <property type="term" value="C:extracellular region"/>
    <property type="evidence" value="ECO:0000314"/>
    <property type="project" value="UniProtKB"/>
</dbReference>
<dbReference type="GO" id="GO:0005509">
    <property type="term" value="F:calcium ion binding"/>
    <property type="evidence" value="ECO:0007669"/>
    <property type="project" value="InterPro"/>
</dbReference>
<dbReference type="GO" id="GO:0047498">
    <property type="term" value="F:calcium-dependent phospholipase A2 activity"/>
    <property type="evidence" value="ECO:0007669"/>
    <property type="project" value="TreeGrafter"/>
</dbReference>
<dbReference type="GO" id="GO:0004623">
    <property type="term" value="F:phospholipase A2 activity"/>
    <property type="evidence" value="ECO:0000314"/>
    <property type="project" value="UniProtKB"/>
</dbReference>
<dbReference type="GO" id="GO:0005543">
    <property type="term" value="F:phospholipid binding"/>
    <property type="evidence" value="ECO:0007669"/>
    <property type="project" value="TreeGrafter"/>
</dbReference>
<dbReference type="GO" id="GO:0090729">
    <property type="term" value="F:toxin activity"/>
    <property type="evidence" value="ECO:0000314"/>
    <property type="project" value="UniProtKB"/>
</dbReference>
<dbReference type="GO" id="GO:0050482">
    <property type="term" value="P:arachidonate secretion"/>
    <property type="evidence" value="ECO:0007669"/>
    <property type="project" value="InterPro"/>
</dbReference>
<dbReference type="GO" id="GO:0051715">
    <property type="term" value="P:cytolysis in another organism"/>
    <property type="evidence" value="ECO:0000314"/>
    <property type="project" value="UniProtKB"/>
</dbReference>
<dbReference type="GO" id="GO:0042130">
    <property type="term" value="P:negative regulation of T cell proliferation"/>
    <property type="evidence" value="ECO:0007669"/>
    <property type="project" value="TreeGrafter"/>
</dbReference>
<dbReference type="GO" id="GO:0009395">
    <property type="term" value="P:phospholipid catabolic process"/>
    <property type="evidence" value="ECO:0000314"/>
    <property type="project" value="UniProtKB"/>
</dbReference>
<dbReference type="GO" id="GO:0044398">
    <property type="term" value="P:venom-mediated edema in another organism"/>
    <property type="evidence" value="ECO:0000314"/>
    <property type="project" value="UniProtKB"/>
</dbReference>
<dbReference type="GO" id="GO:0044521">
    <property type="term" value="P:venom-mediated muscle damage in another organism"/>
    <property type="evidence" value="ECO:0000314"/>
    <property type="project" value="UniProtKB"/>
</dbReference>
<dbReference type="CDD" id="cd00125">
    <property type="entry name" value="PLA2c"/>
    <property type="match status" value="1"/>
</dbReference>
<dbReference type="FunFam" id="1.20.90.10:FF:000001">
    <property type="entry name" value="Basic phospholipase A2 homolog"/>
    <property type="match status" value="1"/>
</dbReference>
<dbReference type="Gene3D" id="1.20.90.10">
    <property type="entry name" value="Phospholipase A2 domain"/>
    <property type="match status" value="1"/>
</dbReference>
<dbReference type="InterPro" id="IPR001211">
    <property type="entry name" value="PLipase_A2"/>
</dbReference>
<dbReference type="InterPro" id="IPR033112">
    <property type="entry name" value="PLipase_A2_Asp_AS"/>
</dbReference>
<dbReference type="InterPro" id="IPR016090">
    <property type="entry name" value="PLipase_A2_dom"/>
</dbReference>
<dbReference type="InterPro" id="IPR036444">
    <property type="entry name" value="PLipase_A2_dom_sf"/>
</dbReference>
<dbReference type="InterPro" id="IPR033113">
    <property type="entry name" value="PLipase_A2_His_AS"/>
</dbReference>
<dbReference type="PANTHER" id="PTHR11716">
    <property type="entry name" value="PHOSPHOLIPASE A2 FAMILY MEMBER"/>
    <property type="match status" value="1"/>
</dbReference>
<dbReference type="PANTHER" id="PTHR11716:SF9">
    <property type="entry name" value="PHOSPHOLIPASE A2, MEMBRANE ASSOCIATED"/>
    <property type="match status" value="1"/>
</dbReference>
<dbReference type="Pfam" id="PF00068">
    <property type="entry name" value="Phospholip_A2_1"/>
    <property type="match status" value="1"/>
</dbReference>
<dbReference type="PRINTS" id="PR00389">
    <property type="entry name" value="PHPHLIPASEA2"/>
</dbReference>
<dbReference type="SMART" id="SM00085">
    <property type="entry name" value="PA2c"/>
    <property type="match status" value="1"/>
</dbReference>
<dbReference type="SUPFAM" id="SSF48619">
    <property type="entry name" value="Phospholipase A2, PLA2"/>
    <property type="match status" value="1"/>
</dbReference>
<dbReference type="PROSITE" id="PS00119">
    <property type="entry name" value="PA2_ASP"/>
    <property type="match status" value="1"/>
</dbReference>
<dbReference type="PROSITE" id="PS00118">
    <property type="entry name" value="PA2_HIS"/>
    <property type="match status" value="1"/>
</dbReference>
<feature type="chain" id="PRO_0000401141" description="Basic phospholipase A2 BmjeTX-I">
    <location>
        <begin position="1"/>
        <end position="121"/>
    </location>
</feature>
<feature type="active site" evidence="1">
    <location>
        <position position="48"/>
    </location>
</feature>
<feature type="active site" evidence="1">
    <location>
        <position position="89"/>
    </location>
</feature>
<feature type="binding site" evidence="1">
    <location>
        <position position="27"/>
    </location>
    <ligand>
        <name>Ca(2+)</name>
        <dbReference type="ChEBI" id="CHEBI:29108"/>
    </ligand>
</feature>
<feature type="binding site" evidence="1">
    <location>
        <position position="29"/>
    </location>
    <ligand>
        <name>Ca(2+)</name>
        <dbReference type="ChEBI" id="CHEBI:29108"/>
    </ligand>
</feature>
<feature type="binding site" evidence="1">
    <location>
        <position position="31"/>
    </location>
    <ligand>
        <name>Ca(2+)</name>
        <dbReference type="ChEBI" id="CHEBI:29108"/>
    </ligand>
</feature>
<feature type="binding site" evidence="1">
    <location>
        <position position="49"/>
    </location>
    <ligand>
        <name>Ca(2+)</name>
        <dbReference type="ChEBI" id="CHEBI:29108"/>
    </ligand>
</feature>
<feature type="disulfide bond" evidence="1">
    <location>
        <begin position="26"/>
        <end position="114"/>
    </location>
</feature>
<feature type="disulfide bond" evidence="1">
    <location>
        <begin position="28"/>
        <end position="45"/>
    </location>
</feature>
<feature type="disulfide bond" evidence="1">
    <location>
        <begin position="44"/>
        <end position="95"/>
    </location>
</feature>
<feature type="disulfide bond" evidence="1">
    <location>
        <begin position="50"/>
        <end position="121"/>
    </location>
</feature>
<feature type="disulfide bond" evidence="1">
    <location>
        <begin position="51"/>
        <end position="88"/>
    </location>
</feature>
<feature type="disulfide bond" evidence="1">
    <location>
        <begin position="58"/>
        <end position="82"/>
    </location>
</feature>
<feature type="disulfide bond" evidence="1">
    <location>
        <begin position="76"/>
        <end position="86"/>
    </location>
</feature>
<sequence length="121" mass="13810">DLWQFGQMILKETGKIPFPYYGAYGCYCGWGGRGGKPKAGTDRCCYVHDCCYGKLTSCPKTDDRYSYSWLDGTIVCGEDDPCKELCECDKKIAVCFRENLGTYNKKYRYHLKSCKKADKPC</sequence>
<evidence type="ECO:0000250" key="1">
    <source>
        <dbReference type="UniProtKB" id="P59071"/>
    </source>
</evidence>
<evidence type="ECO:0000250" key="2">
    <source>
        <dbReference type="UniProtKB" id="P84397"/>
    </source>
</evidence>
<evidence type="ECO:0000255" key="3">
    <source>
        <dbReference type="PROSITE-ProRule" id="PRU10035"/>
    </source>
</evidence>
<evidence type="ECO:0000255" key="4">
    <source>
        <dbReference type="PROSITE-ProRule" id="PRU10036"/>
    </source>
</evidence>
<evidence type="ECO:0000269" key="5">
    <source>
    </source>
</evidence>
<evidence type="ECO:0000305" key="6"/>
<proteinExistence type="evidence at protein level"/>
<organism>
    <name type="scientific">Bothrops marajoensis</name>
    <name type="common">Marajo lancehead</name>
    <dbReference type="NCBI Taxonomy" id="157554"/>
    <lineage>
        <taxon>Eukaryota</taxon>
        <taxon>Metazoa</taxon>
        <taxon>Chordata</taxon>
        <taxon>Craniata</taxon>
        <taxon>Vertebrata</taxon>
        <taxon>Euteleostomi</taxon>
        <taxon>Lepidosauria</taxon>
        <taxon>Squamata</taxon>
        <taxon>Bifurcata</taxon>
        <taxon>Unidentata</taxon>
        <taxon>Episquamata</taxon>
        <taxon>Toxicofera</taxon>
        <taxon>Serpentes</taxon>
        <taxon>Colubroidea</taxon>
        <taxon>Viperidae</taxon>
        <taxon>Crotalinae</taxon>
        <taxon>Bothrops</taxon>
    </lineage>
</organism>
<keyword id="KW-0106">Calcium</keyword>
<keyword id="KW-0903">Direct protein sequencing</keyword>
<keyword id="KW-1015">Disulfide bond</keyword>
<keyword id="KW-0378">Hydrolase</keyword>
<keyword id="KW-0442">Lipid degradation</keyword>
<keyword id="KW-0443">Lipid metabolism</keyword>
<keyword id="KW-0479">Metal-binding</keyword>
<keyword id="KW-0959">Myotoxin</keyword>
<keyword id="KW-0528">Neurotoxin</keyword>
<keyword id="KW-0638">Presynaptic neurotoxin</keyword>
<keyword id="KW-0964">Secreted</keyword>
<keyword id="KW-0800">Toxin</keyword>
<comment type="function">
    <text evidence="5">Snake venom phospholipase A2 (PLA2) that induces a slight blockade of neuromuscular contraction in an indirectly stimulated chick biventer cervicis nerve-muscle preparation. Does not inhibit contraction of chick biventer cervicic nerve-muscle preparation in response to treatment with acetylcholine or KCl. The neuromuscular blockade is mediated by inhibitory action at the presynaptic motor nerve endings. Lyses skeletal myoblasts and myotubes in vitro, and intramuscular injection causes local muscle necrosis. Induces edema in the mouse foot pad. Induces a transient increase of IL-6 levels. PLA2 catalyzes the calcium-dependent hydrolysis of the 2-acyl groups in 3-sn-phosphoglycerides.</text>
</comment>
<comment type="catalytic activity">
    <reaction evidence="3 4 5">
        <text>a 1,2-diacyl-sn-glycero-3-phosphocholine + H2O = a 1-acyl-sn-glycero-3-phosphocholine + a fatty acid + H(+)</text>
        <dbReference type="Rhea" id="RHEA:15801"/>
        <dbReference type="ChEBI" id="CHEBI:15377"/>
        <dbReference type="ChEBI" id="CHEBI:15378"/>
        <dbReference type="ChEBI" id="CHEBI:28868"/>
        <dbReference type="ChEBI" id="CHEBI:57643"/>
        <dbReference type="ChEBI" id="CHEBI:58168"/>
        <dbReference type="EC" id="3.1.1.4"/>
    </reaction>
</comment>
<comment type="cofactor">
    <cofactor evidence="1">
        <name>Ca(2+)</name>
        <dbReference type="ChEBI" id="CHEBI:29108"/>
    </cofactor>
    <text evidence="1">Binds 1 Ca(2+) ion.</text>
</comment>
<comment type="subcellular location">
    <subcellularLocation>
        <location evidence="5">Secreted</location>
    </subcellularLocation>
</comment>
<comment type="tissue specificity">
    <text evidence="5">Expressed by the venom gland.</text>
</comment>
<comment type="mass spectrometry" mass="13825.73" method="MALDI" evidence="5"/>
<comment type="similarity">
    <text evidence="6">Belongs to the phospholipase A2 family. Group II subfamily. D49 sub-subfamily.</text>
</comment>